<keyword id="KW-1003">Cell membrane</keyword>
<keyword id="KW-0444">Lipid biosynthesis</keyword>
<keyword id="KW-0443">Lipid metabolism</keyword>
<keyword id="KW-0472">Membrane</keyword>
<keyword id="KW-0594">Phospholipid biosynthesis</keyword>
<keyword id="KW-1208">Phospholipid metabolism</keyword>
<keyword id="KW-0808">Transferase</keyword>
<keyword id="KW-0812">Transmembrane</keyword>
<keyword id="KW-1133">Transmembrane helix</keyword>
<sequence length="237" mass="26604">MPINPLYLFPNLFTASSIFLGMMSIFYASSYQFVMACWLVVASLILDGLDGRVARLTNTTSKFGIEFDSLADVVAFGVAPSLITYFYVGYNFGRIGMAVSALFVIFGAIRLARFNISTNTSDPYSFIGIPIPAAAVLVVLCVLLDNKYHFLEGNTEKLFLGFIVLLGVLMVSNIRYPNFKKVKWNLKLFILVLIFLSLVFVRPLEALSVFMGLYLIYGIIRWIFLMVKIIFNKNKSA</sequence>
<organism>
    <name type="scientific">Helicobacter pylori (strain J99 / ATCC 700824)</name>
    <name type="common">Campylobacter pylori J99</name>
    <dbReference type="NCBI Taxonomy" id="85963"/>
    <lineage>
        <taxon>Bacteria</taxon>
        <taxon>Pseudomonadati</taxon>
        <taxon>Campylobacterota</taxon>
        <taxon>Epsilonproteobacteria</taxon>
        <taxon>Campylobacterales</taxon>
        <taxon>Helicobacteraceae</taxon>
        <taxon>Helicobacter</taxon>
    </lineage>
</organism>
<accession>Q9ZM68</accession>
<name>PSS_HELPJ</name>
<protein>
    <recommendedName>
        <fullName>CDP-diacylglycerol--serine O-phosphatidyltransferase</fullName>
        <ecNumber>2.7.8.8</ecNumber>
    </recommendedName>
    <alternativeName>
        <fullName>Phosphatidylserine synthase</fullName>
    </alternativeName>
</protein>
<evidence type="ECO:0000255" key="1"/>
<evidence type="ECO:0000305" key="2"/>
<comment type="catalytic activity">
    <reaction>
        <text>a CDP-1,2-diacyl-sn-glycerol + L-serine = a 1,2-diacyl-sn-glycero-3-phospho-L-serine + CMP + H(+)</text>
        <dbReference type="Rhea" id="RHEA:16913"/>
        <dbReference type="ChEBI" id="CHEBI:15378"/>
        <dbReference type="ChEBI" id="CHEBI:33384"/>
        <dbReference type="ChEBI" id="CHEBI:57262"/>
        <dbReference type="ChEBI" id="CHEBI:58332"/>
        <dbReference type="ChEBI" id="CHEBI:60377"/>
        <dbReference type="EC" id="2.7.8.8"/>
    </reaction>
</comment>
<comment type="subcellular location">
    <subcellularLocation>
        <location>Cell membrane</location>
        <topology>Multi-pass membrane protein</topology>
    </subcellularLocation>
</comment>
<comment type="similarity">
    <text evidence="2">Belongs to the CDP-alcohol phosphatidyltransferase class-I family.</text>
</comment>
<gene>
    <name type="primary">pssA</name>
    <name type="synonym">ptr</name>
    <name type="ordered locus">jhp_0354</name>
</gene>
<feature type="chain" id="PRO_0000056795" description="CDP-diacylglycerol--serine O-phosphatidyltransferase">
    <location>
        <begin position="1"/>
        <end position="237"/>
    </location>
</feature>
<feature type="transmembrane region" description="Helical" evidence="1">
    <location>
        <begin position="3"/>
        <end position="23"/>
    </location>
</feature>
<feature type="transmembrane region" description="Helical" evidence="1">
    <location>
        <begin position="25"/>
        <end position="45"/>
    </location>
</feature>
<feature type="transmembrane region" description="Helical" evidence="1">
    <location>
        <begin position="73"/>
        <end position="93"/>
    </location>
</feature>
<feature type="transmembrane region" description="Helical" evidence="1">
    <location>
        <begin position="95"/>
        <end position="115"/>
    </location>
</feature>
<feature type="transmembrane region" description="Helical" evidence="1">
    <location>
        <begin position="124"/>
        <end position="144"/>
    </location>
</feature>
<feature type="transmembrane region" description="Helical" evidence="1">
    <location>
        <begin position="150"/>
        <end position="170"/>
    </location>
</feature>
<feature type="transmembrane region" description="Helical" evidence="1">
    <location>
        <begin position="184"/>
        <end position="204"/>
    </location>
</feature>
<feature type="transmembrane region" description="Helical" evidence="1">
    <location>
        <begin position="207"/>
        <end position="227"/>
    </location>
</feature>
<dbReference type="EC" id="2.7.8.8"/>
<dbReference type="EMBL" id="AE001439">
    <property type="protein sequence ID" value="AAD05934.1"/>
    <property type="molecule type" value="Genomic_DNA"/>
</dbReference>
<dbReference type="PIR" id="B71941">
    <property type="entry name" value="B71941"/>
</dbReference>
<dbReference type="RefSeq" id="WP_001122212.1">
    <property type="nucleotide sequence ID" value="NZ_CP011330.1"/>
</dbReference>
<dbReference type="SMR" id="Q9ZM68"/>
<dbReference type="KEGG" id="hpj:jhp_0354"/>
<dbReference type="PATRIC" id="fig|85963.30.peg.657"/>
<dbReference type="eggNOG" id="COG1183">
    <property type="taxonomic scope" value="Bacteria"/>
</dbReference>
<dbReference type="Proteomes" id="UP000000804">
    <property type="component" value="Chromosome"/>
</dbReference>
<dbReference type="GO" id="GO:0005886">
    <property type="term" value="C:plasma membrane"/>
    <property type="evidence" value="ECO:0007669"/>
    <property type="project" value="UniProtKB-SubCell"/>
</dbReference>
<dbReference type="GO" id="GO:0003882">
    <property type="term" value="F:CDP-diacylglycerol-serine O-phosphatidyltransferase activity"/>
    <property type="evidence" value="ECO:0007669"/>
    <property type="project" value="UniProtKB-EC"/>
</dbReference>
<dbReference type="GO" id="GO:0008654">
    <property type="term" value="P:phospholipid biosynthetic process"/>
    <property type="evidence" value="ECO:0007669"/>
    <property type="project" value="UniProtKB-KW"/>
</dbReference>
<dbReference type="Gene3D" id="1.20.120.1760">
    <property type="match status" value="1"/>
</dbReference>
<dbReference type="InterPro" id="IPR050324">
    <property type="entry name" value="CDP-alcohol_PTase-I"/>
</dbReference>
<dbReference type="InterPro" id="IPR004533">
    <property type="entry name" value="CDP-diaglyc--ser_O-PTrfase"/>
</dbReference>
<dbReference type="InterPro" id="IPR000462">
    <property type="entry name" value="CDP-OH_P_trans"/>
</dbReference>
<dbReference type="InterPro" id="IPR043130">
    <property type="entry name" value="CDP-OH_PTrfase_TM_dom"/>
</dbReference>
<dbReference type="InterPro" id="IPR048254">
    <property type="entry name" value="CDP_ALCOHOL_P_TRANSF_CS"/>
</dbReference>
<dbReference type="NCBIfam" id="TIGR00473">
    <property type="entry name" value="pssA"/>
    <property type="match status" value="1"/>
</dbReference>
<dbReference type="PANTHER" id="PTHR14269">
    <property type="entry name" value="CDP-DIACYLGLYCEROL--GLYCEROL-3-PHOSPHATE 3-PHOSPHATIDYLTRANSFERASE-RELATED"/>
    <property type="match status" value="1"/>
</dbReference>
<dbReference type="PANTHER" id="PTHR14269:SF61">
    <property type="entry name" value="CDP-DIACYLGLYCEROL--SERINE O-PHOSPHATIDYLTRANSFERASE"/>
    <property type="match status" value="1"/>
</dbReference>
<dbReference type="Pfam" id="PF01066">
    <property type="entry name" value="CDP-OH_P_transf"/>
    <property type="match status" value="1"/>
</dbReference>
<dbReference type="PROSITE" id="PS00379">
    <property type="entry name" value="CDP_ALCOHOL_P_TRANSF"/>
    <property type="match status" value="1"/>
</dbReference>
<proteinExistence type="inferred from homology"/>
<reference key="1">
    <citation type="journal article" date="1999" name="Nature">
        <title>Genomic sequence comparison of two unrelated isolates of the human gastric pathogen Helicobacter pylori.</title>
        <authorList>
            <person name="Alm R.A."/>
            <person name="Ling L.-S.L."/>
            <person name="Moir D.T."/>
            <person name="King B.L."/>
            <person name="Brown E.D."/>
            <person name="Doig P.C."/>
            <person name="Smith D.R."/>
            <person name="Noonan B."/>
            <person name="Guild B.C."/>
            <person name="deJonge B.L."/>
            <person name="Carmel G."/>
            <person name="Tummino P.J."/>
            <person name="Caruso A."/>
            <person name="Uria-Nickelsen M."/>
            <person name="Mills D.M."/>
            <person name="Ives C."/>
            <person name="Gibson R."/>
            <person name="Merberg D."/>
            <person name="Mills S.D."/>
            <person name="Jiang Q."/>
            <person name="Taylor D.E."/>
            <person name="Vovis G.F."/>
            <person name="Trust T.J."/>
        </authorList>
    </citation>
    <scope>NUCLEOTIDE SEQUENCE [LARGE SCALE GENOMIC DNA]</scope>
    <source>
        <strain>J99 / ATCC 700824</strain>
    </source>
</reference>